<organism>
    <name type="scientific">Gloeobacter violaceus (strain ATCC 29082 / PCC 7421)</name>
    <dbReference type="NCBI Taxonomy" id="251221"/>
    <lineage>
        <taxon>Bacteria</taxon>
        <taxon>Bacillati</taxon>
        <taxon>Cyanobacteriota</taxon>
        <taxon>Cyanophyceae</taxon>
        <taxon>Gloeobacterales</taxon>
        <taxon>Gloeobacteraceae</taxon>
        <taxon>Gloeobacter</taxon>
    </lineage>
</organism>
<gene>
    <name type="primary">glvI</name>
    <name type="ordered locus">glr4197</name>
</gene>
<keyword id="KW-0002">3D-structure</keyword>
<keyword id="KW-0997">Cell inner membrane</keyword>
<keyword id="KW-1003">Cell membrane</keyword>
<keyword id="KW-0407">Ion channel</keyword>
<keyword id="KW-0406">Ion transport</keyword>
<keyword id="KW-1071">Ligand-gated ion channel</keyword>
<keyword id="KW-0472">Membrane</keyword>
<keyword id="KW-0630">Potassium</keyword>
<keyword id="KW-0631">Potassium channel</keyword>
<keyword id="KW-0633">Potassium transport</keyword>
<keyword id="KW-0675">Receptor</keyword>
<keyword id="KW-1185">Reference proteome</keyword>
<keyword id="KW-0732">Signal</keyword>
<keyword id="KW-0915">Sodium</keyword>
<keyword id="KW-0894">Sodium channel</keyword>
<keyword id="KW-0739">Sodium transport</keyword>
<keyword id="KW-0812">Transmembrane</keyword>
<keyword id="KW-1133">Transmembrane helix</keyword>
<keyword id="KW-0813">Transport</keyword>
<sequence length="359" mass="40986">MFPTGWRPKLSESIAASRMLWQPMAAVAVVQIGLLWFSPPVWGQDMVSPPPPIADEPLTVNTGIYLIECYSLDDKAETFKVNAFLSLSWKDRRLAFDPVRSGVRVKTYEPEAIWIPEIRFVNVENARDADVVDISVSPDGTVQYLERFSARVLSPLDFRRYPFDSQTLHIYLIVRSVDTRNIVLAVDLEKVGKNDDVFLTGWDIESFTAVVKPANFALEDRLESKLDYQLRISRQYFSYIPNIILPMLFILFISWTAFWSTSYEANVTLVVSTLIAHIAFNILVETNLPKTPYMTYTGAIIFMIYLFYFVAVIEVTVQHYLKVESQPARAASITRASRIAFPVVFLLANIILAFLFFGF</sequence>
<evidence type="ECO:0000255" key="1"/>
<evidence type="ECO:0000269" key="2">
    <source>
    </source>
</evidence>
<evidence type="ECO:0000269" key="3">
    <source>
    </source>
</evidence>
<evidence type="ECO:0000269" key="4">
    <source>
    </source>
</evidence>
<evidence type="ECO:0000269" key="5">
    <source>
    </source>
</evidence>
<evidence type="ECO:0000269" key="6">
    <source>
    </source>
</evidence>
<evidence type="ECO:0000269" key="7">
    <source>
    </source>
</evidence>
<evidence type="ECO:0000305" key="8"/>
<evidence type="ECO:0007829" key="9">
    <source>
        <dbReference type="PDB" id="3IGQ"/>
    </source>
</evidence>
<evidence type="ECO:0007829" key="10">
    <source>
        <dbReference type="PDB" id="5IUX"/>
    </source>
</evidence>
<evidence type="ECO:0007829" key="11">
    <source>
        <dbReference type="PDB" id="6F0U"/>
    </source>
</evidence>
<evidence type="ECO:0007829" key="12">
    <source>
        <dbReference type="PDB" id="6HZ0"/>
    </source>
</evidence>
<evidence type="ECO:0007829" key="13">
    <source>
        <dbReference type="PDB" id="6HZW"/>
    </source>
</evidence>
<evidence type="ECO:0007829" key="14">
    <source>
        <dbReference type="PDB" id="8ATG"/>
    </source>
</evidence>
<comment type="function">
    <text evidence="2">Cationic channel with similar permeabilities for Na(+) and K(+), that is activated by an increase of the proton concentration on the extracellular side. Displays no permeability for chloride ions. Shows slow kinetics of activation, no desensitization and a single channel conductance of 8 pS. Might contribute to adaptation to external pH change.</text>
</comment>
<comment type="activity regulation">
    <text evidence="2 5 6">Tetraethylammonium (TEA) and tetrabutylammonium (TBA) inhibit the proton-activated currents in a dose- and voltage-dependent manner in vitro, whereas the blocker of acid sensing ion channels, amiloride, has no effect. Channel current of GLIC can be inhibited by inhaled and intravenous general anesthetics at and below concentrations used clinically. Ion conduction is also inhibited by lidocaine and by divalent transition metal ions such as cadmium ions.</text>
</comment>
<comment type="subunit">
    <text evidence="2 3 4">Homopentamer.</text>
</comment>
<comment type="interaction">
    <interactant intactId="EBI-8423601">
        <id>Q7NDN8</id>
    </interactant>
    <interactant intactId="EBI-8423601">
        <id>Q7NDN8</id>
        <label>glvI</label>
    </interactant>
    <organismsDiffer>false</organismsDiffer>
    <experiments>26</experiments>
</comment>
<comment type="subcellular location">
    <subcellularLocation>
        <location evidence="8">Cell inner membrane</location>
        <topology evidence="8">Multi-pass membrane protein</topology>
    </subcellularLocation>
</comment>
<comment type="domain">
    <text>Consists of an N-terminal ligand-binding domain that encloses a wide aqueous vestibule and a transmembrane domain that forms a narrow channel.</text>
</comment>
<comment type="miscellaneous">
    <text>The homologous nature of GLIC to eukaryotic nicotinic acetylcholine receptors and other eukaryotic pentameric ligand-gated ion channels, and its sensitivity to general anesthetics, define GLIC as a structural and functional model of signal transduction in the nervous system, also relevant for exploring the molecular basis of anesthetic action.</text>
</comment>
<comment type="similarity">
    <text evidence="8">Belongs to the ligand-gated ion channel (TC 1.A.9) family.</text>
</comment>
<feature type="signal peptide" evidence="1">
    <location>
        <begin position="1"/>
        <end position="43"/>
    </location>
</feature>
<feature type="chain" id="PRO_0000412722" description="Proton-gated ion channel">
    <location>
        <begin position="44"/>
        <end position="359"/>
    </location>
</feature>
<feature type="topological domain" description="Periplasmic" evidence="1">
    <location>
        <begin position="44"/>
        <end position="235"/>
    </location>
</feature>
<feature type="transmembrane region" description="Helical">
    <location>
        <begin position="236"/>
        <end position="258"/>
    </location>
</feature>
<feature type="topological domain" description="Cytoplasmic" evidence="1">
    <location>
        <begin position="259"/>
        <end position="261"/>
    </location>
</feature>
<feature type="transmembrane region" description="Helical">
    <location>
        <begin position="262"/>
        <end position="286"/>
    </location>
</feature>
<feature type="topological domain" description="Periplasmic" evidence="1">
    <location>
        <begin position="287"/>
        <end position="294"/>
    </location>
</feature>
<feature type="transmembrane region" description="Helical">
    <location>
        <begin position="295"/>
        <end position="323"/>
    </location>
</feature>
<feature type="topological domain" description="Cytoplasmic" evidence="1">
    <location>
        <begin position="324"/>
        <end position="326"/>
    </location>
</feature>
<feature type="transmembrane region" description="Helical">
    <location>
        <begin position="327"/>
        <end position="359"/>
    </location>
</feature>
<feature type="mutagenesis site" description="Marked gain of function, with a ten-fold shift of the proton dose-response curve towards lower concentrations." evidence="7">
    <original>I</original>
    <variation>Y</variation>
    <location>
        <position position="244"/>
    </location>
</feature>
<feature type="mutagenesis site" description="Decreases cation selectivity. Decreases the binding affinity of TEA and TBA. Nearly abolishes block by Cd(2+)." evidence="3 6">
    <original>E</original>
    <variation>A</variation>
    <location>
        <position position="264"/>
    </location>
</feature>
<feature type="mutagenesis site" description="Decreases binding affinity of TBA." evidence="3 6">
    <original>E</original>
    <variation>Q</variation>
    <variation>D</variation>
    <location>
        <position position="264"/>
    </location>
</feature>
<feature type="mutagenesis site" description="Increases the binding affinity of TBA. Weakens block by Cd(2+)." evidence="6">
    <original>T</original>
    <variation>A</variation>
    <location>
        <position position="268"/>
    </location>
</feature>
<feature type="mutagenesis site" description="Increases the binding affinity of TBA." evidence="6">
    <original>S</original>
    <variation>A</variation>
    <location>
        <position position="272"/>
    </location>
</feature>
<feature type="mutagenesis site" description="Displays an increased sensitivity to propofol but not to desflurane." evidence="7">
    <original>V</original>
    <variation>M</variation>
    <location>
        <position position="284"/>
    </location>
</feature>
<feature type="mutagenesis site" description="Marked gain of function, with a ten-fold shift of the proton dose-response curve towards lower concentrations. Also shows slower apparent rate constants for activation and deactivation. Displays an increased sensitivity to propofol but a decreased sensitivity to desflurane." evidence="7">
    <original>T</original>
    <variation>A</variation>
    <location>
        <position position="297"/>
    </location>
</feature>
<feature type="strand" evidence="13">
    <location>
        <begin position="53"/>
        <end position="55"/>
    </location>
</feature>
<feature type="strand" evidence="13">
    <location>
        <begin position="58"/>
        <end position="73"/>
    </location>
</feature>
<feature type="turn" evidence="13">
    <location>
        <begin position="74"/>
        <end position="77"/>
    </location>
</feature>
<feature type="strand" evidence="13">
    <location>
        <begin position="78"/>
        <end position="90"/>
    </location>
</feature>
<feature type="helix" evidence="13">
    <location>
        <begin position="92"/>
        <end position="94"/>
    </location>
</feature>
<feature type="helix" evidence="13">
    <location>
        <begin position="98"/>
        <end position="101"/>
    </location>
</feature>
<feature type="strand" evidence="11">
    <location>
        <begin position="104"/>
        <end position="107"/>
    </location>
</feature>
<feature type="turn" evidence="13">
    <location>
        <begin position="110"/>
        <end position="112"/>
    </location>
</feature>
<feature type="strand" evidence="13">
    <location>
        <begin position="118"/>
        <end position="125"/>
    </location>
</feature>
<feature type="strand" evidence="13">
    <location>
        <begin position="128"/>
        <end position="136"/>
    </location>
</feature>
<feature type="turn" evidence="12">
    <location>
        <begin position="138"/>
        <end position="140"/>
    </location>
</feature>
<feature type="strand" evidence="13">
    <location>
        <begin position="141"/>
        <end position="153"/>
    </location>
</feature>
<feature type="turn" evidence="13">
    <location>
        <begin position="159"/>
        <end position="162"/>
    </location>
</feature>
<feature type="strand" evidence="13">
    <location>
        <begin position="165"/>
        <end position="175"/>
    </location>
</feature>
<feature type="strand" evidence="14">
    <location>
        <begin position="177"/>
        <end position="179"/>
    </location>
</feature>
<feature type="strand" evidence="13">
    <location>
        <begin position="182"/>
        <end position="186"/>
    </location>
</feature>
<feature type="helix" evidence="13">
    <location>
        <begin position="188"/>
        <end position="190"/>
    </location>
</feature>
<feature type="strand" evidence="9">
    <location>
        <begin position="192"/>
        <end position="194"/>
    </location>
</feature>
<feature type="strand" evidence="9">
    <location>
        <begin position="196"/>
        <end position="199"/>
    </location>
</feature>
<feature type="strand" evidence="13">
    <location>
        <begin position="202"/>
        <end position="218"/>
    </location>
</feature>
<feature type="strand" evidence="13">
    <location>
        <begin position="221"/>
        <end position="234"/>
    </location>
</feature>
<feature type="helix" evidence="10">
    <location>
        <begin position="236"/>
        <end position="238"/>
    </location>
</feature>
<feature type="helix" evidence="13">
    <location>
        <begin position="239"/>
        <end position="242"/>
    </location>
</feature>
<feature type="helix" evidence="13">
    <location>
        <begin position="244"/>
        <end position="254"/>
    </location>
</feature>
<feature type="helix" evidence="13">
    <location>
        <begin position="255"/>
        <end position="259"/>
    </location>
</feature>
<feature type="helix" evidence="13">
    <location>
        <begin position="263"/>
        <end position="286"/>
    </location>
</feature>
<feature type="helix" evidence="13">
    <location>
        <begin position="296"/>
        <end position="323"/>
    </location>
</feature>
<feature type="helix" evidence="13">
    <location>
        <begin position="327"/>
        <end position="356"/>
    </location>
</feature>
<accession>Q7NDN8</accession>
<dbReference type="EMBL" id="BA000045">
    <property type="protein sequence ID" value="BAC92138.1"/>
    <property type="molecule type" value="Genomic_DNA"/>
</dbReference>
<dbReference type="RefSeq" id="NP_927143.1">
    <property type="nucleotide sequence ID" value="NC_005125.1"/>
</dbReference>
<dbReference type="RefSeq" id="WP_011144181.1">
    <property type="nucleotide sequence ID" value="NC_005125.1"/>
</dbReference>
<dbReference type="PDB" id="2XQ3">
    <property type="method" value="X-ray"/>
    <property type="resolution" value="3.50 A"/>
    <property type="chains" value="A/B/C/D/E=43-359"/>
</dbReference>
<dbReference type="PDB" id="2XQ4">
    <property type="method" value="X-ray"/>
    <property type="resolution" value="3.60 A"/>
    <property type="chains" value="A/B/C/D/E=43-359"/>
</dbReference>
<dbReference type="PDB" id="2XQ5">
    <property type="method" value="X-ray"/>
    <property type="resolution" value="3.50 A"/>
    <property type="chains" value="A/B/C/D/E=43-359"/>
</dbReference>
<dbReference type="PDB" id="2XQ6">
    <property type="method" value="X-ray"/>
    <property type="resolution" value="3.70 A"/>
    <property type="chains" value="A/B/C/D/E=43-359"/>
</dbReference>
<dbReference type="PDB" id="2XQ7">
    <property type="method" value="X-ray"/>
    <property type="resolution" value="3.40 A"/>
    <property type="chains" value="A/B/C/D/E=43-359"/>
</dbReference>
<dbReference type="PDB" id="2XQ8">
    <property type="method" value="X-ray"/>
    <property type="resolution" value="3.60 A"/>
    <property type="chains" value="A/B/C/D/E=43-359"/>
</dbReference>
<dbReference type="PDB" id="2XQ9">
    <property type="method" value="X-ray"/>
    <property type="resolution" value="3.20 A"/>
    <property type="chains" value="A/B/C/D/E=43-359"/>
</dbReference>
<dbReference type="PDB" id="2XQA">
    <property type="method" value="X-ray"/>
    <property type="resolution" value="3.70 A"/>
    <property type="chains" value="A/B/C/D/E=43-359"/>
</dbReference>
<dbReference type="PDB" id="3EAM">
    <property type="method" value="X-ray"/>
    <property type="resolution" value="2.90 A"/>
    <property type="chains" value="A/B/C/D/E=44-359"/>
</dbReference>
<dbReference type="PDB" id="3EHZ">
    <property type="method" value="X-ray"/>
    <property type="resolution" value="3.10 A"/>
    <property type="chains" value="A/B/C/D/E=50-359"/>
</dbReference>
<dbReference type="PDB" id="3EI0">
    <property type="method" value="X-ray"/>
    <property type="resolution" value="3.50 A"/>
    <property type="chains" value="A/B/C/D/E=50-359"/>
</dbReference>
<dbReference type="PDB" id="3IGQ">
    <property type="method" value="X-ray"/>
    <property type="resolution" value="2.30 A"/>
    <property type="chains" value="A/B/C/D/E/F=44-235"/>
</dbReference>
<dbReference type="PDB" id="3LSV">
    <property type="method" value="X-ray"/>
    <property type="resolution" value="3.15 A"/>
    <property type="chains" value="A/B/C/D/E=44-359"/>
</dbReference>
<dbReference type="PDB" id="3P4W">
    <property type="method" value="X-ray"/>
    <property type="resolution" value="3.20 A"/>
    <property type="chains" value="A/B/C/D/E=44-359"/>
</dbReference>
<dbReference type="PDB" id="3P50">
    <property type="method" value="X-ray"/>
    <property type="resolution" value="3.30 A"/>
    <property type="chains" value="A/B/C/D/E=44-359"/>
</dbReference>
<dbReference type="PDB" id="3TLS">
    <property type="method" value="X-ray"/>
    <property type="resolution" value="3.20 A"/>
    <property type="chains" value="A/B/C/D/E=44-359"/>
</dbReference>
<dbReference type="PDB" id="3TLT">
    <property type="method" value="X-ray"/>
    <property type="resolution" value="3.30 A"/>
    <property type="chains" value="A/B/C/D/E=44-359"/>
</dbReference>
<dbReference type="PDB" id="3TLU">
    <property type="method" value="X-ray"/>
    <property type="resolution" value="2.85 A"/>
    <property type="chains" value="A/B/C/D/E=44-359"/>
</dbReference>
<dbReference type="PDB" id="3TLV">
    <property type="method" value="X-ray"/>
    <property type="resolution" value="2.90 A"/>
    <property type="chains" value="A/B/C/D/E=44-359"/>
</dbReference>
<dbReference type="PDB" id="3TLW">
    <property type="method" value="X-ray"/>
    <property type="resolution" value="2.60 A"/>
    <property type="chains" value="A/B/C/D/E=44-359"/>
</dbReference>
<dbReference type="PDB" id="3UU3">
    <property type="method" value="X-ray"/>
    <property type="resolution" value="3.15 A"/>
    <property type="chains" value="A/B/C/D/E=44-359"/>
</dbReference>
<dbReference type="PDB" id="3UU4">
    <property type="method" value="X-ray"/>
    <property type="resolution" value="3.05 A"/>
    <property type="chains" value="A/B/C/D/E=44-359"/>
</dbReference>
<dbReference type="PDB" id="3UU5">
    <property type="method" value="X-ray"/>
    <property type="resolution" value="2.90 A"/>
    <property type="chains" value="A/B/C/D/E=44-359"/>
</dbReference>
<dbReference type="PDB" id="3UU6">
    <property type="method" value="X-ray"/>
    <property type="resolution" value="2.98 A"/>
    <property type="chains" value="A/B/C/D/E=44-359"/>
</dbReference>
<dbReference type="PDB" id="3UU8">
    <property type="method" value="X-ray"/>
    <property type="resolution" value="3.25 A"/>
    <property type="chains" value="A/B/C/D/E=44-359"/>
</dbReference>
<dbReference type="PDB" id="3UUB">
    <property type="method" value="X-ray"/>
    <property type="resolution" value="2.90 A"/>
    <property type="chains" value="A/B/C/D/E/F/G/H/I/J=44-359"/>
</dbReference>
<dbReference type="PDB" id="4F8H">
    <property type="method" value="X-ray"/>
    <property type="resolution" value="2.99 A"/>
    <property type="chains" value="A/B/C/D/E=43-359"/>
</dbReference>
<dbReference type="PDB" id="4HFB">
    <property type="method" value="X-ray"/>
    <property type="resolution" value="2.75 A"/>
    <property type="chains" value="A/B/C/D/E=44-359"/>
</dbReference>
<dbReference type="PDB" id="4HFC">
    <property type="method" value="X-ray"/>
    <property type="resolution" value="3.05 A"/>
    <property type="chains" value="A/B/C/D/E=44-359"/>
</dbReference>
<dbReference type="PDB" id="4HFD">
    <property type="method" value="X-ray"/>
    <property type="resolution" value="3.10 A"/>
    <property type="chains" value="A/B/C/D/E=44-359"/>
</dbReference>
<dbReference type="PDB" id="4HFE">
    <property type="method" value="X-ray"/>
    <property type="resolution" value="2.80 A"/>
    <property type="chains" value="A/B/C/D/E=44-359"/>
</dbReference>
<dbReference type="PDB" id="4HFH">
    <property type="method" value="X-ray"/>
    <property type="resolution" value="2.65 A"/>
    <property type="chains" value="A/B/C/D/E=44-359"/>
</dbReference>
<dbReference type="PDB" id="4HFI">
    <property type="method" value="X-ray"/>
    <property type="resolution" value="2.40 A"/>
    <property type="chains" value="A/B/C/D/E=44-359"/>
</dbReference>
<dbReference type="PDB" id="4IL4">
    <property type="method" value="X-ray"/>
    <property type="resolution" value="3.30 A"/>
    <property type="chains" value="A/B/C/D/E=44-359"/>
</dbReference>
<dbReference type="PDB" id="4IL9">
    <property type="method" value="X-ray"/>
    <property type="resolution" value="2.83 A"/>
    <property type="chains" value="A/B/C/D/E=44-358"/>
</dbReference>
<dbReference type="PDB" id="4ILA">
    <property type="method" value="X-ray"/>
    <property type="resolution" value="3.50 A"/>
    <property type="chains" value="A/B/C/D/E=44-358"/>
</dbReference>
<dbReference type="PDB" id="4ILB">
    <property type="method" value="X-ray"/>
    <property type="resolution" value="3.15 A"/>
    <property type="chains" value="A/B/C/D/E=44-358"/>
</dbReference>
<dbReference type="PDB" id="4ILC">
    <property type="method" value="X-ray"/>
    <property type="resolution" value="2.99 A"/>
    <property type="chains" value="A/B/C/D/E=44-358"/>
</dbReference>
<dbReference type="PDB" id="4IRE">
    <property type="method" value="X-ray"/>
    <property type="resolution" value="3.19 A"/>
    <property type="chains" value="A/B/C/D/E=43-359"/>
</dbReference>
<dbReference type="PDB" id="4LMJ">
    <property type="method" value="X-ray"/>
    <property type="resolution" value="3.44 A"/>
    <property type="chains" value="A/B/C/D/E=44-359"/>
</dbReference>
<dbReference type="PDB" id="4LMK">
    <property type="method" value="X-ray"/>
    <property type="resolution" value="3.22 A"/>
    <property type="chains" value="A/B/C/D/E=44-359"/>
</dbReference>
<dbReference type="PDB" id="4LML">
    <property type="method" value="X-ray"/>
    <property type="resolution" value="3.80 A"/>
    <property type="chains" value="A/B/C/D/E=44-359"/>
</dbReference>
<dbReference type="PDB" id="4NPP">
    <property type="method" value="X-ray"/>
    <property type="resolution" value="3.35 A"/>
    <property type="chains" value="A/B/C/D/E=44-359"/>
</dbReference>
<dbReference type="PDB" id="4NPQ">
    <property type="method" value="X-ray"/>
    <property type="resolution" value="4.35 A"/>
    <property type="chains" value="A/B/C/D/E/F/G/H/I/J/K/L/M/N/O/P/Q/R/S/T=44-359"/>
</dbReference>
<dbReference type="PDB" id="4QH1">
    <property type="method" value="X-ray"/>
    <property type="resolution" value="3.40 A"/>
    <property type="chains" value="A/B/C/D/E=44-359"/>
</dbReference>
<dbReference type="PDB" id="4QH4">
    <property type="method" value="X-ray"/>
    <property type="resolution" value="3.20 A"/>
    <property type="chains" value="A/B/C/D/E=44-359"/>
</dbReference>
<dbReference type="PDB" id="4QH5">
    <property type="method" value="X-ray"/>
    <property type="resolution" value="3.00 A"/>
    <property type="chains" value="A/B/C/D/E=44-359"/>
</dbReference>
<dbReference type="PDB" id="4X5T">
    <property type="method" value="X-ray"/>
    <property type="resolution" value="3.50 A"/>
    <property type="chains" value="A/B/C/D/E=44-235"/>
</dbReference>
<dbReference type="PDB" id="4YEU">
    <property type="method" value="X-ray"/>
    <property type="resolution" value="4.60 A"/>
    <property type="chains" value="A/B/C/D/E=236-357"/>
</dbReference>
<dbReference type="PDB" id="4ZZB">
    <property type="method" value="X-ray"/>
    <property type="resolution" value="3.40 A"/>
    <property type="chains" value="A/B/C/D/E=44-359"/>
</dbReference>
<dbReference type="PDB" id="4ZZC">
    <property type="method" value="X-ray"/>
    <property type="resolution" value="3.10 A"/>
    <property type="chains" value="A/B/C/D/E=43-359"/>
</dbReference>
<dbReference type="PDB" id="5HCJ">
    <property type="method" value="X-ray"/>
    <property type="resolution" value="2.95 A"/>
    <property type="chains" value="A/B/C/D/E=44-359"/>
</dbReference>
<dbReference type="PDB" id="5HCM">
    <property type="method" value="X-ray"/>
    <property type="resolution" value="3.15 A"/>
    <property type="chains" value="A/B/C/D/E=44-359"/>
</dbReference>
<dbReference type="PDB" id="5HEG">
    <property type="method" value="X-ray"/>
    <property type="resolution" value="3.21 A"/>
    <property type="chains" value="A/B/C/D/E=44-359"/>
</dbReference>
<dbReference type="PDB" id="5HEH">
    <property type="method" value="X-ray"/>
    <property type="resolution" value="3.30 A"/>
    <property type="chains" value="A/B/C/D/E=44-359"/>
</dbReference>
<dbReference type="PDB" id="5IUX">
    <property type="method" value="X-ray"/>
    <property type="resolution" value="2.60 A"/>
    <property type="chains" value="A/B/C/D/E=43-359"/>
</dbReference>
<dbReference type="PDB" id="5J0Z">
    <property type="method" value="X-ray"/>
    <property type="resolution" value="3.25 A"/>
    <property type="chains" value="A/B/C/D/E=47-357"/>
</dbReference>
<dbReference type="PDB" id="5L47">
    <property type="method" value="X-ray"/>
    <property type="resolution" value="3.30 A"/>
    <property type="chains" value="A/B/C/D/E=43-359"/>
</dbReference>
<dbReference type="PDB" id="5L4E">
    <property type="method" value="X-ray"/>
    <property type="resolution" value="3.50 A"/>
    <property type="chains" value="A/B/C/D/E=43-359"/>
</dbReference>
<dbReference type="PDB" id="5L4H">
    <property type="method" value="X-ray"/>
    <property type="resolution" value="3.30 A"/>
    <property type="chains" value="A/B/C/D/E=43-359"/>
</dbReference>
<dbReference type="PDB" id="5MUO">
    <property type="method" value="X-ray"/>
    <property type="resolution" value="3.19 A"/>
    <property type="chains" value="A/B/C/D/E=44-359"/>
</dbReference>
<dbReference type="PDB" id="5MUR">
    <property type="method" value="X-ray"/>
    <property type="resolution" value="3.10 A"/>
    <property type="chains" value="A/B/C/D/E=43-359"/>
</dbReference>
<dbReference type="PDB" id="5MVM">
    <property type="method" value="X-ray"/>
    <property type="resolution" value="3.10 A"/>
    <property type="chains" value="A/B/C/D/E=43-359"/>
</dbReference>
<dbReference type="PDB" id="5MVN">
    <property type="method" value="X-ray"/>
    <property type="resolution" value="3.49 A"/>
    <property type="chains" value="A/B/C/D/E=43-359"/>
</dbReference>
<dbReference type="PDB" id="5MZQ">
    <property type="method" value="X-ray"/>
    <property type="resolution" value="2.80 A"/>
    <property type="chains" value="A/B/C/D/E=43-359"/>
</dbReference>
<dbReference type="PDB" id="5MZR">
    <property type="method" value="X-ray"/>
    <property type="resolution" value="2.65 A"/>
    <property type="chains" value="A/B/C/D/E=43-359"/>
</dbReference>
<dbReference type="PDB" id="5MZT">
    <property type="method" value="X-ray"/>
    <property type="resolution" value="2.65 A"/>
    <property type="chains" value="A/B/C/D/E=43-359"/>
</dbReference>
<dbReference type="PDB" id="5NJY">
    <property type="method" value="X-ray"/>
    <property type="resolution" value="2.95 A"/>
    <property type="chains" value="A/B/C/D/E=43-359"/>
</dbReference>
<dbReference type="PDB" id="5NKJ">
    <property type="method" value="X-ray"/>
    <property type="resolution" value="3.74 A"/>
    <property type="chains" value="A/B/C/D/E=43-359"/>
</dbReference>
<dbReference type="PDB" id="5OSA">
    <property type="method" value="X-ray"/>
    <property type="resolution" value="2.75 A"/>
    <property type="chains" value="A/B/C/D/E=44-236"/>
</dbReference>
<dbReference type="PDB" id="5OSB">
    <property type="method" value="X-ray"/>
    <property type="resolution" value="3.80 A"/>
    <property type="chains" value="A/B/C/D/E=44-236"/>
</dbReference>
<dbReference type="PDB" id="5OSC">
    <property type="method" value="X-ray"/>
    <property type="resolution" value="3.10 A"/>
    <property type="chains" value="A/B/C/D/E=44-236"/>
</dbReference>
<dbReference type="PDB" id="5V6N">
    <property type="method" value="X-ray"/>
    <property type="resolution" value="3.35 A"/>
    <property type="chains" value="A/B/C/D/E=50-359"/>
</dbReference>
<dbReference type="PDB" id="5V6O">
    <property type="method" value="X-ray"/>
    <property type="resolution" value="3.12 A"/>
    <property type="chains" value="A/B/C/D/E=50-359"/>
</dbReference>
<dbReference type="PDB" id="6EMX">
    <property type="method" value="X-ray"/>
    <property type="resolution" value="3.20 A"/>
    <property type="chains" value="A/B/C/D/E=43-359"/>
</dbReference>
<dbReference type="PDB" id="6F0I">
    <property type="method" value="X-ray"/>
    <property type="resolution" value="3.00 A"/>
    <property type="chains" value="A/B/C/D/E=43-359"/>
</dbReference>
<dbReference type="PDB" id="6F0J">
    <property type="method" value="X-ray"/>
    <property type="resolution" value="3.15 A"/>
    <property type="chains" value="A/B/C/D/E=43-359"/>
</dbReference>
<dbReference type="PDB" id="6F0M">
    <property type="method" value="X-ray"/>
    <property type="resolution" value="2.65 A"/>
    <property type="chains" value="A/B/C/D/E=43-359"/>
</dbReference>
<dbReference type="PDB" id="6F0N">
    <property type="method" value="X-ray"/>
    <property type="resolution" value="3.20 A"/>
    <property type="chains" value="A/B/C/D/E=43-359"/>
</dbReference>
<dbReference type="PDB" id="6F0R">
    <property type="method" value="X-ray"/>
    <property type="resolution" value="2.50 A"/>
    <property type="chains" value="A/B/C/D/E=43-359"/>
</dbReference>
<dbReference type="PDB" id="6F0U">
    <property type="method" value="X-ray"/>
    <property type="resolution" value="2.35 A"/>
    <property type="chains" value="A/B/C/D/E=43-359"/>
</dbReference>
<dbReference type="PDB" id="6F0V">
    <property type="method" value="X-ray"/>
    <property type="resolution" value="2.85 A"/>
    <property type="chains" value="A/B/C/D/E=43-359"/>
</dbReference>
<dbReference type="PDB" id="6F0Z">
    <property type="method" value="X-ray"/>
    <property type="resolution" value="2.50 A"/>
    <property type="chains" value="A/B/C/D/E=43-359"/>
</dbReference>
<dbReference type="PDB" id="6F10">
    <property type="method" value="X-ray"/>
    <property type="resolution" value="2.85 A"/>
    <property type="chains" value="A/B/C/D/E=43-359"/>
</dbReference>
<dbReference type="PDB" id="6F11">
    <property type="method" value="X-ray"/>
    <property type="resolution" value="2.95 A"/>
    <property type="chains" value="A/B/C/D/E=43-359"/>
</dbReference>
<dbReference type="PDB" id="6F12">
    <property type="method" value="X-ray"/>
    <property type="resolution" value="3.20 A"/>
    <property type="chains" value="A/B/C/D/E=43-359"/>
</dbReference>
<dbReference type="PDB" id="6F13">
    <property type="method" value="X-ray"/>
    <property type="resolution" value="2.70 A"/>
    <property type="chains" value="A/B/C/D/E=43-359"/>
</dbReference>
<dbReference type="PDB" id="6F15">
    <property type="method" value="X-ray"/>
    <property type="resolution" value="2.85 A"/>
    <property type="chains" value="A/B/C/D/E=43-359"/>
</dbReference>
<dbReference type="PDB" id="6F16">
    <property type="method" value="X-ray"/>
    <property type="resolution" value="2.60 A"/>
    <property type="chains" value="A/B/C/D/E=43-359"/>
</dbReference>
<dbReference type="PDB" id="6F7A">
    <property type="method" value="X-ray"/>
    <property type="resolution" value="6.00 A"/>
    <property type="chains" value="A/B/C/D/E=47-357"/>
</dbReference>
<dbReference type="PDB" id="6HJ3">
    <property type="method" value="X-ray"/>
    <property type="resolution" value="2.70 A"/>
    <property type="chains" value="A/B/C/D/E=43-359"/>
</dbReference>
<dbReference type="PDB" id="6HJA">
    <property type="method" value="X-ray"/>
    <property type="resolution" value="2.70 A"/>
    <property type="chains" value="A/B/C/D/E=1-359"/>
</dbReference>
<dbReference type="PDB" id="6HJB">
    <property type="method" value="X-ray"/>
    <property type="resolution" value="3.00 A"/>
    <property type="chains" value="A/B/C/D/E=1-359"/>
</dbReference>
<dbReference type="PDB" id="6HJI">
    <property type="method" value="X-ray"/>
    <property type="resolution" value="2.80 A"/>
    <property type="chains" value="A/B/C/D/E=43-359"/>
</dbReference>
<dbReference type="PDB" id="6HJZ">
    <property type="method" value="X-ray"/>
    <property type="resolution" value="2.50 A"/>
    <property type="chains" value="A/B/C/D/E/F/G/H/I/J=43-359"/>
</dbReference>
<dbReference type="PDB" id="6HPP">
    <property type="method" value="X-ray"/>
    <property type="resolution" value="3.20 A"/>
    <property type="chains" value="A/B/C/D/E=43-359"/>
</dbReference>
<dbReference type="PDB" id="6HY5">
    <property type="method" value="X-ray"/>
    <property type="resolution" value="2.58 A"/>
    <property type="chains" value="A/B/C/D/E=47-357"/>
</dbReference>
<dbReference type="PDB" id="6HY9">
    <property type="method" value="X-ray"/>
    <property type="resolution" value="2.95 A"/>
    <property type="chains" value="A/B/C/D/E=44-359"/>
</dbReference>
<dbReference type="PDB" id="6HYA">
    <property type="method" value="X-ray"/>
    <property type="resolution" value="3.39 A"/>
    <property type="chains" value="A/B/C/D/E=43-359"/>
</dbReference>
<dbReference type="PDB" id="6HYR">
    <property type="method" value="X-ray"/>
    <property type="resolution" value="3.50 A"/>
    <property type="chains" value="A/B/C/D/E=47-357"/>
</dbReference>
<dbReference type="PDB" id="6HYV">
    <property type="method" value="X-ray"/>
    <property type="resolution" value="2.80 A"/>
    <property type="chains" value="A/B/C/D/E=43-359"/>
</dbReference>
<dbReference type="PDB" id="6HYW">
    <property type="method" value="X-ray"/>
    <property type="resolution" value="2.80 A"/>
    <property type="chains" value="A/B/C/D/E=43-359"/>
</dbReference>
<dbReference type="PDB" id="6HYX">
    <property type="method" value="X-ray"/>
    <property type="resolution" value="3.00 A"/>
    <property type="chains" value="A/B/C/D/E=43-359"/>
</dbReference>
<dbReference type="PDB" id="6HYZ">
    <property type="method" value="X-ray"/>
    <property type="resolution" value="3.05 A"/>
    <property type="chains" value="A/B/C/D/E=43-359"/>
</dbReference>
<dbReference type="PDB" id="6HZ0">
    <property type="method" value="X-ray"/>
    <property type="resolution" value="2.75 A"/>
    <property type="chains" value="A/B/C/D/E=43-359"/>
</dbReference>
<dbReference type="PDB" id="6HZ1">
    <property type="method" value="X-ray"/>
    <property type="resolution" value="2.50 A"/>
    <property type="chains" value="A/B/C/D/E=44-359"/>
</dbReference>
<dbReference type="PDB" id="6HZ3">
    <property type="method" value="X-ray"/>
    <property type="resolution" value="3.15 A"/>
    <property type="chains" value="A/B/C/D/E=43-359"/>
</dbReference>
<dbReference type="PDB" id="6HZW">
    <property type="method" value="X-ray"/>
    <property type="resolution" value="2.22 A"/>
    <property type="chains" value="A/B/C/D/E=43-359"/>
</dbReference>
<dbReference type="PDB" id="6I08">
    <property type="method" value="X-ray"/>
    <property type="resolution" value="3.00 A"/>
    <property type="chains" value="A/B/C/D/E=43-359"/>
</dbReference>
<dbReference type="PDB" id="6ZGD">
    <property type="method" value="EM"/>
    <property type="resolution" value="4.10 A"/>
    <property type="chains" value="A/B/C/D/E=44-359"/>
</dbReference>
<dbReference type="PDB" id="6ZGJ">
    <property type="method" value="EM"/>
    <property type="resolution" value="3.40 A"/>
    <property type="chains" value="A/B/C/D/E=44-359"/>
</dbReference>
<dbReference type="PDB" id="6ZGK">
    <property type="method" value="EM"/>
    <property type="resolution" value="3.60 A"/>
    <property type="chains" value="A/B/C/D/E=44-359"/>
</dbReference>
<dbReference type="PDB" id="8ATG">
    <property type="method" value="EM"/>
    <property type="resolution" value="2.90 A"/>
    <property type="chains" value="A/B/C/D/E=44-359"/>
</dbReference>
<dbReference type="PDB" id="8I41">
    <property type="method" value="EM"/>
    <property type="resolution" value="3.42 A"/>
    <property type="chains" value="A/B/C/D/E=47-359"/>
</dbReference>
<dbReference type="PDB" id="8I42">
    <property type="method" value="EM"/>
    <property type="resolution" value="2.92 A"/>
    <property type="chains" value="A/B/C/D/E=47-358"/>
</dbReference>
<dbReference type="PDB" id="8I47">
    <property type="method" value="EM"/>
    <property type="resolution" value="2.70 A"/>
    <property type="chains" value="A/B/C/D/E=47-358"/>
</dbReference>
<dbReference type="PDB" id="8I48">
    <property type="method" value="EM"/>
    <property type="resolution" value="2.74 A"/>
    <property type="chains" value="A/B/C/D/E=47-358"/>
</dbReference>
<dbReference type="PDB" id="8JJ3">
    <property type="method" value="EM"/>
    <property type="resolution" value="2.65 A"/>
    <property type="chains" value="A/B/C/D/E=47-358"/>
</dbReference>
<dbReference type="PDB" id="8WCQ">
    <property type="method" value="EM"/>
    <property type="resolution" value="3.35 A"/>
    <property type="chains" value="A/B/C/D/E=47-358"/>
</dbReference>
<dbReference type="PDB" id="8WCR">
    <property type="method" value="EM"/>
    <property type="resolution" value="2.74 A"/>
    <property type="chains" value="A/B/C/D/E=47-358"/>
</dbReference>
<dbReference type="PDBsum" id="2XQ3"/>
<dbReference type="PDBsum" id="2XQ4"/>
<dbReference type="PDBsum" id="2XQ5"/>
<dbReference type="PDBsum" id="2XQ6"/>
<dbReference type="PDBsum" id="2XQ7"/>
<dbReference type="PDBsum" id="2XQ8"/>
<dbReference type="PDBsum" id="2XQ9"/>
<dbReference type="PDBsum" id="2XQA"/>
<dbReference type="PDBsum" id="3EAM"/>
<dbReference type="PDBsum" id="3EHZ"/>
<dbReference type="PDBsum" id="3EI0"/>
<dbReference type="PDBsum" id="3IGQ"/>
<dbReference type="PDBsum" id="3LSV"/>
<dbReference type="PDBsum" id="3P4W"/>
<dbReference type="PDBsum" id="3P50"/>
<dbReference type="PDBsum" id="3TLS"/>
<dbReference type="PDBsum" id="3TLT"/>
<dbReference type="PDBsum" id="3TLU"/>
<dbReference type="PDBsum" id="3TLV"/>
<dbReference type="PDBsum" id="3TLW"/>
<dbReference type="PDBsum" id="3UU3"/>
<dbReference type="PDBsum" id="3UU4"/>
<dbReference type="PDBsum" id="3UU5"/>
<dbReference type="PDBsum" id="3UU6"/>
<dbReference type="PDBsum" id="3UU8"/>
<dbReference type="PDBsum" id="3UUB"/>
<dbReference type="PDBsum" id="4F8H"/>
<dbReference type="PDBsum" id="4HFB"/>
<dbReference type="PDBsum" id="4HFC"/>
<dbReference type="PDBsum" id="4HFD"/>
<dbReference type="PDBsum" id="4HFE"/>
<dbReference type="PDBsum" id="4HFH"/>
<dbReference type="PDBsum" id="4HFI"/>
<dbReference type="PDBsum" id="4IL4"/>
<dbReference type="PDBsum" id="4IL9"/>
<dbReference type="PDBsum" id="4ILA"/>
<dbReference type="PDBsum" id="4ILB"/>
<dbReference type="PDBsum" id="4ILC"/>
<dbReference type="PDBsum" id="4IRE"/>
<dbReference type="PDBsum" id="4LMJ"/>
<dbReference type="PDBsum" id="4LMK"/>
<dbReference type="PDBsum" id="4LML"/>
<dbReference type="PDBsum" id="4NPP"/>
<dbReference type="PDBsum" id="4NPQ"/>
<dbReference type="PDBsum" id="4QH1"/>
<dbReference type="PDBsum" id="4QH4"/>
<dbReference type="PDBsum" id="4QH5"/>
<dbReference type="PDBsum" id="4X5T"/>
<dbReference type="PDBsum" id="4YEU"/>
<dbReference type="PDBsum" id="4ZZB"/>
<dbReference type="PDBsum" id="4ZZC"/>
<dbReference type="PDBsum" id="5HCJ"/>
<dbReference type="PDBsum" id="5HCM"/>
<dbReference type="PDBsum" id="5HEG"/>
<dbReference type="PDBsum" id="5HEH"/>
<dbReference type="PDBsum" id="5IUX"/>
<dbReference type="PDBsum" id="5J0Z"/>
<dbReference type="PDBsum" id="5L47"/>
<dbReference type="PDBsum" id="5L4E"/>
<dbReference type="PDBsum" id="5L4H"/>
<dbReference type="PDBsum" id="5MUO"/>
<dbReference type="PDBsum" id="5MUR"/>
<dbReference type="PDBsum" id="5MVM"/>
<dbReference type="PDBsum" id="5MVN"/>
<dbReference type="PDBsum" id="5MZQ"/>
<dbReference type="PDBsum" id="5MZR"/>
<dbReference type="PDBsum" id="5MZT"/>
<dbReference type="PDBsum" id="5NJY"/>
<dbReference type="PDBsum" id="5NKJ"/>
<dbReference type="PDBsum" id="5OSA"/>
<dbReference type="PDBsum" id="5OSB"/>
<dbReference type="PDBsum" id="5OSC"/>
<dbReference type="PDBsum" id="5V6N"/>
<dbReference type="PDBsum" id="5V6O"/>
<dbReference type="PDBsum" id="6EMX"/>
<dbReference type="PDBsum" id="6F0I"/>
<dbReference type="PDBsum" id="6F0J"/>
<dbReference type="PDBsum" id="6F0M"/>
<dbReference type="PDBsum" id="6F0N"/>
<dbReference type="PDBsum" id="6F0R"/>
<dbReference type="PDBsum" id="6F0U"/>
<dbReference type="PDBsum" id="6F0V"/>
<dbReference type="PDBsum" id="6F0Z"/>
<dbReference type="PDBsum" id="6F10"/>
<dbReference type="PDBsum" id="6F11"/>
<dbReference type="PDBsum" id="6F12"/>
<dbReference type="PDBsum" id="6F13"/>
<dbReference type="PDBsum" id="6F15"/>
<dbReference type="PDBsum" id="6F16"/>
<dbReference type="PDBsum" id="6F7A"/>
<dbReference type="PDBsum" id="6HJ3"/>
<dbReference type="PDBsum" id="6HJA"/>
<dbReference type="PDBsum" id="6HJB"/>
<dbReference type="PDBsum" id="6HJI"/>
<dbReference type="PDBsum" id="6HJZ"/>
<dbReference type="PDBsum" id="6HPP"/>
<dbReference type="PDBsum" id="6HY5"/>
<dbReference type="PDBsum" id="6HY9"/>
<dbReference type="PDBsum" id="6HYA"/>
<dbReference type="PDBsum" id="6HYR"/>
<dbReference type="PDBsum" id="6HYV"/>
<dbReference type="PDBsum" id="6HYW"/>
<dbReference type="PDBsum" id="6HYX"/>
<dbReference type="PDBsum" id="6HYZ"/>
<dbReference type="PDBsum" id="6HZ0"/>
<dbReference type="PDBsum" id="6HZ1"/>
<dbReference type="PDBsum" id="6HZ3"/>
<dbReference type="PDBsum" id="6HZW"/>
<dbReference type="PDBsum" id="6I08"/>
<dbReference type="PDBsum" id="6ZGD"/>
<dbReference type="PDBsum" id="6ZGJ"/>
<dbReference type="PDBsum" id="6ZGK"/>
<dbReference type="PDBsum" id="8ATG"/>
<dbReference type="PDBsum" id="8I41"/>
<dbReference type="PDBsum" id="8I42"/>
<dbReference type="PDBsum" id="8I47"/>
<dbReference type="PDBsum" id="8I48"/>
<dbReference type="PDBsum" id="8JJ3"/>
<dbReference type="PDBsum" id="8WCQ"/>
<dbReference type="PDBsum" id="8WCR"/>
<dbReference type="BMRB" id="Q7NDN8"/>
<dbReference type="EMDB" id="EMD-11202"/>
<dbReference type="EMDB" id="EMD-11208"/>
<dbReference type="EMDB" id="EMD-11209"/>
<dbReference type="EMDB" id="EMD-15649"/>
<dbReference type="EMDB" id="EMD-35161"/>
<dbReference type="EMDB" id="EMD-35162"/>
<dbReference type="EMDB" id="EMD-35163"/>
<dbReference type="EMDB" id="EMD-35164"/>
<dbReference type="EMDB" id="EMD-36339"/>
<dbReference type="EMDB" id="EMD-37446"/>
<dbReference type="EMDB" id="EMD-37447"/>
<dbReference type="SASBDB" id="Q7NDN8"/>
<dbReference type="SMR" id="Q7NDN8"/>
<dbReference type="DIP" id="DIP-59040N"/>
<dbReference type="MINT" id="Q7NDN8"/>
<dbReference type="STRING" id="251221.gene:10761716"/>
<dbReference type="TCDB" id="1.A.9.8.1">
    <property type="family name" value="the neurotransmitter receptor, cys loop, ligand-gated ion channel (lic) family"/>
</dbReference>
<dbReference type="EnsemblBacteria" id="BAC92138">
    <property type="protein sequence ID" value="BAC92138"/>
    <property type="gene ID" value="BAC92138"/>
</dbReference>
<dbReference type="KEGG" id="gvi:glr4197"/>
<dbReference type="eggNOG" id="COG5361">
    <property type="taxonomic scope" value="Bacteria"/>
</dbReference>
<dbReference type="HOGENOM" id="CLU_010920_3_0_3"/>
<dbReference type="InParanoid" id="Q7NDN8"/>
<dbReference type="OrthoDB" id="548455at2"/>
<dbReference type="PhylomeDB" id="Q7NDN8"/>
<dbReference type="EvolutionaryTrace" id="Q7NDN8"/>
<dbReference type="Proteomes" id="UP000000557">
    <property type="component" value="Chromosome"/>
</dbReference>
<dbReference type="GO" id="GO:0005886">
    <property type="term" value="C:plasma membrane"/>
    <property type="evidence" value="ECO:0007669"/>
    <property type="project" value="UniProtKB-SubCell"/>
</dbReference>
<dbReference type="GO" id="GO:0005230">
    <property type="term" value="F:extracellular ligand-gated monoatomic ion channel activity"/>
    <property type="evidence" value="ECO:0007669"/>
    <property type="project" value="InterPro"/>
</dbReference>
<dbReference type="GO" id="GO:0042802">
    <property type="term" value="F:identical protein binding"/>
    <property type="evidence" value="ECO:0000353"/>
    <property type="project" value="IntAct"/>
</dbReference>
<dbReference type="GO" id="GO:0005267">
    <property type="term" value="F:potassium channel activity"/>
    <property type="evidence" value="ECO:0007669"/>
    <property type="project" value="UniProtKB-KW"/>
</dbReference>
<dbReference type="GO" id="GO:0005272">
    <property type="term" value="F:sodium channel activity"/>
    <property type="evidence" value="ECO:0007669"/>
    <property type="project" value="UniProtKB-KW"/>
</dbReference>
<dbReference type="GO" id="GO:0004888">
    <property type="term" value="F:transmembrane signaling receptor activity"/>
    <property type="evidence" value="ECO:0007669"/>
    <property type="project" value="InterPro"/>
</dbReference>
<dbReference type="CDD" id="cd19050">
    <property type="entry name" value="LGIC_TM_bact"/>
    <property type="match status" value="1"/>
</dbReference>
<dbReference type="FunFam" id="1.20.58.390:FF:000133">
    <property type="entry name" value="Proton-gated ion channel"/>
    <property type="match status" value="1"/>
</dbReference>
<dbReference type="FunFam" id="2.70.170.10:FF:000095">
    <property type="entry name" value="Proton-gated ion channel"/>
    <property type="match status" value="1"/>
</dbReference>
<dbReference type="Gene3D" id="2.70.170.10">
    <property type="entry name" value="Neurotransmitter-gated ion-channel ligand-binding domain"/>
    <property type="match status" value="1"/>
</dbReference>
<dbReference type="Gene3D" id="1.20.58.390">
    <property type="entry name" value="Neurotransmitter-gated ion-channel transmembrane domain"/>
    <property type="match status" value="1"/>
</dbReference>
<dbReference type="InterPro" id="IPR006028">
    <property type="entry name" value="GABAA/Glycine_rcpt"/>
</dbReference>
<dbReference type="InterPro" id="IPR006202">
    <property type="entry name" value="Neur_chan_lig-bd"/>
</dbReference>
<dbReference type="InterPro" id="IPR036734">
    <property type="entry name" value="Neur_chan_lig-bd_sf"/>
</dbReference>
<dbReference type="InterPro" id="IPR006201">
    <property type="entry name" value="Neur_channel"/>
</dbReference>
<dbReference type="InterPro" id="IPR036719">
    <property type="entry name" value="Neuro-gated_channel_TM_sf"/>
</dbReference>
<dbReference type="InterPro" id="IPR038050">
    <property type="entry name" value="Neuro_actylchol_rec"/>
</dbReference>
<dbReference type="PANTHER" id="PTHR18945">
    <property type="entry name" value="NEUROTRANSMITTER GATED ION CHANNEL"/>
    <property type="match status" value="1"/>
</dbReference>
<dbReference type="Pfam" id="PF02931">
    <property type="entry name" value="Neur_chan_LBD"/>
    <property type="match status" value="1"/>
</dbReference>
<dbReference type="PRINTS" id="PR00253">
    <property type="entry name" value="GABAARECEPTR"/>
</dbReference>
<dbReference type="SUPFAM" id="SSF90112">
    <property type="entry name" value="Neurotransmitter-gated ion-channel transmembrane pore"/>
    <property type="match status" value="1"/>
</dbReference>
<dbReference type="SUPFAM" id="SSF63712">
    <property type="entry name" value="Nicotinic receptor ligand binding domain-like"/>
    <property type="match status" value="1"/>
</dbReference>
<name>GLIC_GLOVI</name>
<proteinExistence type="evidence at protein level"/>
<reference key="1">
    <citation type="journal article" date="2003" name="DNA Res.">
        <title>Complete genome structure of Gloeobacter violaceus PCC 7421, a cyanobacterium that lacks thylakoids.</title>
        <authorList>
            <person name="Nakamura Y."/>
            <person name="Kaneko T."/>
            <person name="Sato S."/>
            <person name="Mimuro M."/>
            <person name="Miyashita H."/>
            <person name="Tsuchiya T."/>
            <person name="Sasamoto S."/>
            <person name="Watanabe A."/>
            <person name="Kawashima K."/>
            <person name="Kishida Y."/>
            <person name="Kiyokawa C."/>
            <person name="Kohara M."/>
            <person name="Matsumoto M."/>
            <person name="Matsuno A."/>
            <person name="Nakazaki N."/>
            <person name="Shimpo S."/>
            <person name="Takeuchi C."/>
            <person name="Yamada M."/>
            <person name="Tabata S."/>
        </authorList>
    </citation>
    <scope>NUCLEOTIDE SEQUENCE [LARGE SCALE GENOMIC DNA]</scope>
    <source>
        <strain>ATCC 29082 / PCC 7421</strain>
    </source>
</reference>
<reference key="2">
    <citation type="journal article" date="2007" name="Nature">
        <title>A prokaryotic proton-gated ion channel from the nicotinic acetylcholine receptor family.</title>
        <authorList>
            <person name="Bocquet N."/>
            <person name="Prado de Carvalho L."/>
            <person name="Cartaud J."/>
            <person name="Neyton J."/>
            <person name="Le Poupon C."/>
            <person name="Taly A."/>
            <person name="Grutter T."/>
            <person name="Changeux J.P."/>
            <person name="Corringer P.J."/>
        </authorList>
    </citation>
    <scope>FUNCTION AS A PROTON-GATED ION CHANNEL</scope>
    <scope>ION SELECTIVITY</scope>
    <scope>ACTIVITY REGULATION</scope>
    <scope>SUBUNIT</scope>
    <source>
        <strain>ATCC 29082 / PCC 7421</strain>
    </source>
</reference>
<reference key="3">
    <citation type="journal article" date="2010" name="Anesth. Analg.">
        <title>Anesthetic sensitivity of the Gloeobacter violaceus proton-gated ion channel.</title>
        <authorList>
            <person name="Weng Y."/>
            <person name="Yang L."/>
            <person name="Corringer P.J."/>
            <person name="Sonner J.M."/>
        </authorList>
    </citation>
    <scope>MODULATION BY ANESTHETICS</scope>
    <scope>ACTIVITY REGULATION</scope>
    <source>
        <strain>ATCC 29082 / PCC 7421</strain>
    </source>
</reference>
<reference key="4">
    <citation type="journal article" date="2010" name="Biophys. J.">
        <title>Anesthetic binding in a pentameric ligand-gated ion channel: GLIC.</title>
        <authorList>
            <person name="Chen Q."/>
            <person name="Cheng M.H."/>
            <person name="Xu Y."/>
            <person name="Tang P."/>
        </authorList>
    </citation>
    <scope>ANESTHETIC-BINDING</scope>
    <scope>MUTAGENESIS STUDIES</scope>
    <scope>FLUORESCENCE QUENCHING EXPERIMENTS</scope>
    <source>
        <strain>ATCC 29082 / PCC 7421</strain>
    </source>
</reference>
<reference key="5">
    <citation type="journal article" date="2010" name="J. Physiol. (Lond.)">
        <title>Atomic structure and dynamics of pentameric ligand-gated ion channels: new insight from bacterial homologues.</title>
        <authorList>
            <person name="Corringer P.J."/>
            <person name="Baaden M."/>
            <person name="Bocquet N."/>
            <person name="Delarue M."/>
            <person name="Dufresne V."/>
            <person name="Nury H."/>
            <person name="Prevost M."/>
            <person name="Van Renterghem C."/>
        </authorList>
    </citation>
    <scope>REVIEW</scope>
</reference>
<reference key="6">
    <citation type="journal article" date="2010" name="Proc. Natl. Acad. Sci. U.S.A.">
        <title>Pore opening and closing of a pentameric ligand-gated ion channel.</title>
        <authorList>
            <person name="Zhu F."/>
            <person name="Hummer G."/>
        </authorList>
    </citation>
    <scope>GATING MECHANISM</scope>
</reference>
<reference key="7">
    <citation type="journal article" date="2011" name="Biophys. J.">
        <title>Ion selectivity mechanism in a bacterial pentameric ligand-gated ion channel.</title>
        <authorList>
            <person name="Fritsch S."/>
            <person name="Ivanov I."/>
            <person name="Wang H."/>
            <person name="Cheng X."/>
        </authorList>
    </citation>
    <scope>ION SELECTIVITY MECHANISM</scope>
</reference>
<reference key="8">
    <citation type="journal article" date="2009" name="Nature">
        <title>X-ray structure of a pentameric ligand-gated ion channel in an apparently open conformation.</title>
        <authorList>
            <person name="Bocquet N."/>
            <person name="Nury H."/>
            <person name="Baaden M."/>
            <person name="Le Poupon C."/>
            <person name="Changeux J.P."/>
            <person name="Delarue M."/>
            <person name="Corringer P.J."/>
        </authorList>
    </citation>
    <scope>X-RAY CRYSTALLOGRAPHY (2.90 ANGSTROMS) OF 44-359</scope>
    <scope>SUBUNIT</scope>
    <source>
        <strain>ATCC 29082 / PCC 7421</strain>
    </source>
</reference>
<reference key="9">
    <citation type="journal article" date="2009" name="Nature">
        <title>Structure of a potentially open state of a proton-activated pentameric ligand-gated ion channel.</title>
        <authorList>
            <person name="Hilf R.J."/>
            <person name="Dutzler R."/>
        </authorList>
    </citation>
    <scope>X-RAY CRYSTALLOGRAPHY (3.10 ANGSTROMS) OF 43-359 OF WILD-TYPE AND MUTANT ALA-264</scope>
    <scope>SUBUNIT</scope>
    <scope>MUTAGENESIS OF GLU-264</scope>
    <source>
        <strain>ATCC 29082 / PCC 7421</strain>
    </source>
</reference>
<reference key="10">
    <citation type="journal article" date="2010" name="J. Mol. Biol.">
        <title>Crystal structure of the extracellular domain of a bacterial ligand-gated ion channel.</title>
        <authorList>
            <person name="Nury H."/>
            <person name="Bocquet N."/>
            <person name="Le Poupon C."/>
            <person name="Raynal B."/>
            <person name="Haouz A."/>
            <person name="Corringer P.J."/>
            <person name="Delarue M."/>
        </authorList>
    </citation>
    <scope>X-RAY CRYSTALLOGRAPHY (2.30 ANGSTROMS) OF 44-235</scope>
    <scope>GATING MECHANISM</scope>
    <source>
        <strain>ATCC 29082 / PCC 7421</strain>
    </source>
</reference>
<reference key="11">
    <citation type="journal article" date="2010" name="Nat. Struct. Mol. Biol.">
        <title>Structural basis of open channel block in a prokaryotic pentameric ligand-gated ion channel.</title>
        <authorList>
            <person name="Hilf R.J."/>
            <person name="Bertozzi C."/>
            <person name="Zimmermann I."/>
            <person name="Reiter A."/>
            <person name="Trauner D."/>
            <person name="Dutzler R."/>
        </authorList>
    </citation>
    <scope>X-RAY CRYSTALLOGRAPHY (3.20 ANGSTROMS) OF 43-359 OF WILD-TYPE AND MUTANT ASP-264 IN COMPLEXES WITH POSITIVELY CHARGED INHIBITORS</scope>
    <scope>ACTIVITY REGULATION</scope>
    <scope>MUTAGENESIS OF GLU-264; THR-268 AND SER-272</scope>
    <scope>MECHANISMS OF OPEN CHANNEL BLOCK</scope>
    <source>
        <strain>ATCC 29082 / PCC 7421</strain>
    </source>
</reference>
<reference key="12">
    <citation type="journal article" date="2010" name="Proc. Natl. Acad. Sci. U.S.A.">
        <title>One-microsecond molecular dynamics simulation of channel gating in a nicotinic receptor homologue.</title>
        <authorList>
            <person name="Nury H."/>
            <person name="Poitevin F."/>
            <person name="Van Renterghem C."/>
            <person name="Changeux J.P."/>
            <person name="Corringer P.J."/>
            <person name="Delarue M."/>
            <person name="Baaden M."/>
        </authorList>
    </citation>
    <scope>X-RAY CRYSTALLOGRAPHY (3.15 ANGSTROMS) OF 44-359 OF MUTANT PHE-279</scope>
    <source>
        <strain>ATCC 29082 / PCC 7421</strain>
    </source>
</reference>
<reference key="13">
    <citation type="journal article" date="2011" name="Nature">
        <title>X-ray structures of general anaesthetics bound to a pentameric ligand-gated ion channel.</title>
        <authorList>
            <person name="Nury H."/>
            <person name="Van Renterghem C."/>
            <person name="Weng Y."/>
            <person name="Tran A."/>
            <person name="Baaden M."/>
            <person name="Dusfresne V."/>
            <person name="Changeux J.P."/>
            <person name="Sonner J.M."/>
            <person name="Delarue M."/>
            <person name="Corringer P.J."/>
        </authorList>
    </citation>
    <scope>X-RAY CRYSTALLOGRAPHY (3.30 ANGSTROMS) OF 44-359 IN COMPLEXES WITH PROPOFOL AND DESFLURANE ANESTHETICS</scope>
    <scope>MUTAGENESIS OF ILE-244; VAL-284 AND THR-297</scope>
    <source>
        <strain>ATCC 29082 / PCC 7421</strain>
    </source>
</reference>
<protein>
    <recommendedName>
        <fullName>Proton-gated ion channel</fullName>
    </recommendedName>
    <alternativeName>
        <fullName>GLIC</fullName>
    </alternativeName>
    <alternativeName>
        <fullName>Ligand-gated ion channel</fullName>
        <shortName>LGIC</shortName>
    </alternativeName>
</protein>